<name>DDL_MYCBP</name>
<feature type="chain" id="PRO_1000030468" description="D-alanine--D-alanine ligase">
    <location>
        <begin position="1"/>
        <end position="373"/>
    </location>
</feature>
<feature type="domain" description="ATP-grasp" evidence="2">
    <location>
        <begin position="156"/>
        <end position="363"/>
    </location>
</feature>
<feature type="binding site" evidence="2">
    <location>
        <begin position="184"/>
        <end position="239"/>
    </location>
    <ligand>
        <name>ATP</name>
        <dbReference type="ChEBI" id="CHEBI:30616"/>
    </ligand>
</feature>
<feature type="binding site" evidence="2">
    <location>
        <position position="318"/>
    </location>
    <ligand>
        <name>Mg(2+)</name>
        <dbReference type="ChEBI" id="CHEBI:18420"/>
        <label>1</label>
    </ligand>
</feature>
<feature type="binding site" evidence="2">
    <location>
        <position position="330"/>
    </location>
    <ligand>
        <name>Mg(2+)</name>
        <dbReference type="ChEBI" id="CHEBI:18420"/>
        <label>1</label>
    </ligand>
</feature>
<feature type="binding site" evidence="2">
    <location>
        <position position="330"/>
    </location>
    <ligand>
        <name>Mg(2+)</name>
        <dbReference type="ChEBI" id="CHEBI:18420"/>
        <label>2</label>
    </ligand>
</feature>
<feature type="binding site" evidence="2">
    <location>
        <position position="332"/>
    </location>
    <ligand>
        <name>Mg(2+)</name>
        <dbReference type="ChEBI" id="CHEBI:18420"/>
        <label>2</label>
    </ligand>
</feature>
<accession>A1KMX5</accession>
<keyword id="KW-0067">ATP-binding</keyword>
<keyword id="KW-0133">Cell shape</keyword>
<keyword id="KW-0961">Cell wall biogenesis/degradation</keyword>
<keyword id="KW-0963">Cytoplasm</keyword>
<keyword id="KW-0436">Ligase</keyword>
<keyword id="KW-0460">Magnesium</keyword>
<keyword id="KW-0464">Manganese</keyword>
<keyword id="KW-0479">Metal-binding</keyword>
<keyword id="KW-0547">Nucleotide-binding</keyword>
<keyword id="KW-0573">Peptidoglycan synthesis</keyword>
<organism>
    <name type="scientific">Mycobacterium bovis (strain BCG / Pasteur 1173P2)</name>
    <dbReference type="NCBI Taxonomy" id="410289"/>
    <lineage>
        <taxon>Bacteria</taxon>
        <taxon>Bacillati</taxon>
        <taxon>Actinomycetota</taxon>
        <taxon>Actinomycetes</taxon>
        <taxon>Mycobacteriales</taxon>
        <taxon>Mycobacteriaceae</taxon>
        <taxon>Mycobacterium</taxon>
        <taxon>Mycobacterium tuberculosis complex</taxon>
    </lineage>
</organism>
<comment type="function">
    <text evidence="2">Cell wall formation.</text>
</comment>
<comment type="catalytic activity">
    <reaction evidence="2">
        <text>2 D-alanine + ATP = D-alanyl-D-alanine + ADP + phosphate + H(+)</text>
        <dbReference type="Rhea" id="RHEA:11224"/>
        <dbReference type="ChEBI" id="CHEBI:15378"/>
        <dbReference type="ChEBI" id="CHEBI:30616"/>
        <dbReference type="ChEBI" id="CHEBI:43474"/>
        <dbReference type="ChEBI" id="CHEBI:57416"/>
        <dbReference type="ChEBI" id="CHEBI:57822"/>
        <dbReference type="ChEBI" id="CHEBI:456216"/>
        <dbReference type="EC" id="6.3.2.4"/>
    </reaction>
</comment>
<comment type="cofactor">
    <cofactor evidence="1">
        <name>Mg(2+)</name>
        <dbReference type="ChEBI" id="CHEBI:18420"/>
    </cofactor>
    <cofactor evidence="1">
        <name>Mn(2+)</name>
        <dbReference type="ChEBI" id="CHEBI:29035"/>
    </cofactor>
    <text evidence="1">Binds 2 magnesium or manganese ions per subunit.</text>
</comment>
<comment type="pathway">
    <text evidence="2">Cell wall biogenesis; peptidoglycan biosynthesis.</text>
</comment>
<comment type="subcellular location">
    <subcellularLocation>
        <location evidence="2">Cytoplasm</location>
    </subcellularLocation>
</comment>
<comment type="similarity">
    <text evidence="2">Belongs to the D-alanine--D-alanine ligase family.</text>
</comment>
<sequence>MSANDRRDRRVRVAVVFGGRSNEHAISCVSAGSILRNLDSRRFDVIAVGITPAGSWVLTDANPDALTITNRELPQVKSGSGTELALPADPRRGGQLVSLPPGAGEVLESVDVVFPVLHGPYGEDGTIQGLLELAGVPYVGAGVLASAVGMDKEFTKKLLAADGLPVGAYAVLRPPRSTLHRQECERLGLPVFVKPARGGSSIGVSRVSSWDQLPAAVARARRHDPKVIVEAAISGRELECGVLEMPDGTLEASTLGEIRVAGVRGREDSFYDFATKYLDDAAELDVPAKVDDQVAEAIRQLAIRAFAAIDCRGLARVDFFLTDDGPVINEINTMPGFTTISMYPRMWAASGVDYPTLLATMIETALARGVGLH</sequence>
<protein>
    <recommendedName>
        <fullName evidence="2">D-alanine--D-alanine ligase</fullName>
        <ecNumber evidence="2">6.3.2.4</ecNumber>
    </recommendedName>
    <alternativeName>
        <fullName evidence="2">D-Ala-D-Ala ligase</fullName>
    </alternativeName>
    <alternativeName>
        <fullName evidence="2">D-alanylalanine synthetase</fullName>
    </alternativeName>
</protein>
<evidence type="ECO:0000250" key="1"/>
<evidence type="ECO:0000255" key="2">
    <source>
        <dbReference type="HAMAP-Rule" id="MF_00047"/>
    </source>
</evidence>
<proteinExistence type="inferred from homology"/>
<reference key="1">
    <citation type="journal article" date="2007" name="Proc. Natl. Acad. Sci. U.S.A.">
        <title>Genome plasticity of BCG and impact on vaccine efficacy.</title>
        <authorList>
            <person name="Brosch R."/>
            <person name="Gordon S.V."/>
            <person name="Garnier T."/>
            <person name="Eiglmeier K."/>
            <person name="Frigui W."/>
            <person name="Valenti P."/>
            <person name="Dos Santos S."/>
            <person name="Duthoy S."/>
            <person name="Lacroix C."/>
            <person name="Garcia-Pelayo C."/>
            <person name="Inwald J.K."/>
            <person name="Golby P."/>
            <person name="Garcia J.N."/>
            <person name="Hewinson R.G."/>
            <person name="Behr M.A."/>
            <person name="Quail M.A."/>
            <person name="Churcher C."/>
            <person name="Barrell B.G."/>
            <person name="Parkhill J."/>
            <person name="Cole S.T."/>
        </authorList>
    </citation>
    <scope>NUCLEOTIDE SEQUENCE [LARGE SCALE GENOMIC DNA]</scope>
    <source>
        <strain>BCG / Pasteur 1173P2</strain>
    </source>
</reference>
<gene>
    <name evidence="2" type="primary">ddl</name>
    <name type="ordered locus">BCG_3002c</name>
</gene>
<dbReference type="EC" id="6.3.2.4" evidence="2"/>
<dbReference type="EMBL" id="AM408590">
    <property type="protein sequence ID" value="CAL72991.1"/>
    <property type="molecule type" value="Genomic_DNA"/>
</dbReference>
<dbReference type="SMR" id="A1KMX5"/>
<dbReference type="KEGG" id="mbb:BCG_3002c"/>
<dbReference type="HOGENOM" id="CLU_039268_0_1_11"/>
<dbReference type="UniPathway" id="UPA00219"/>
<dbReference type="Proteomes" id="UP000001472">
    <property type="component" value="Chromosome"/>
</dbReference>
<dbReference type="GO" id="GO:0005829">
    <property type="term" value="C:cytosol"/>
    <property type="evidence" value="ECO:0007669"/>
    <property type="project" value="TreeGrafter"/>
</dbReference>
<dbReference type="GO" id="GO:0005524">
    <property type="term" value="F:ATP binding"/>
    <property type="evidence" value="ECO:0007669"/>
    <property type="project" value="UniProtKB-KW"/>
</dbReference>
<dbReference type="GO" id="GO:0008716">
    <property type="term" value="F:D-alanine-D-alanine ligase activity"/>
    <property type="evidence" value="ECO:0007669"/>
    <property type="project" value="UniProtKB-UniRule"/>
</dbReference>
<dbReference type="GO" id="GO:0046872">
    <property type="term" value="F:metal ion binding"/>
    <property type="evidence" value="ECO:0007669"/>
    <property type="project" value="UniProtKB-KW"/>
</dbReference>
<dbReference type="GO" id="GO:0071555">
    <property type="term" value="P:cell wall organization"/>
    <property type="evidence" value="ECO:0007669"/>
    <property type="project" value="UniProtKB-KW"/>
</dbReference>
<dbReference type="GO" id="GO:0009252">
    <property type="term" value="P:peptidoglycan biosynthetic process"/>
    <property type="evidence" value="ECO:0007669"/>
    <property type="project" value="UniProtKB-UniRule"/>
</dbReference>
<dbReference type="GO" id="GO:0008360">
    <property type="term" value="P:regulation of cell shape"/>
    <property type="evidence" value="ECO:0007669"/>
    <property type="project" value="UniProtKB-KW"/>
</dbReference>
<dbReference type="FunFam" id="3.30.1490.20:FF:000039">
    <property type="entry name" value="D-alanine--D-alanine ligase"/>
    <property type="match status" value="1"/>
</dbReference>
<dbReference type="FunFam" id="3.30.470.20:FF:000008">
    <property type="entry name" value="D-alanine--D-alanine ligase"/>
    <property type="match status" value="1"/>
</dbReference>
<dbReference type="Gene3D" id="3.40.50.20">
    <property type="match status" value="1"/>
</dbReference>
<dbReference type="Gene3D" id="3.30.1490.20">
    <property type="entry name" value="ATP-grasp fold, A domain"/>
    <property type="match status" value="1"/>
</dbReference>
<dbReference type="Gene3D" id="3.30.470.20">
    <property type="entry name" value="ATP-grasp fold, B domain"/>
    <property type="match status" value="1"/>
</dbReference>
<dbReference type="HAMAP" id="MF_00047">
    <property type="entry name" value="Dala_Dala_lig"/>
    <property type="match status" value="1"/>
</dbReference>
<dbReference type="InterPro" id="IPR011761">
    <property type="entry name" value="ATP-grasp"/>
</dbReference>
<dbReference type="InterPro" id="IPR013815">
    <property type="entry name" value="ATP_grasp_subdomain_1"/>
</dbReference>
<dbReference type="InterPro" id="IPR000291">
    <property type="entry name" value="D-Ala_lig_Van_CS"/>
</dbReference>
<dbReference type="InterPro" id="IPR005905">
    <property type="entry name" value="D_ala_D_ala"/>
</dbReference>
<dbReference type="InterPro" id="IPR011095">
    <property type="entry name" value="Dala_Dala_lig_C"/>
</dbReference>
<dbReference type="InterPro" id="IPR011127">
    <property type="entry name" value="Dala_Dala_lig_N"/>
</dbReference>
<dbReference type="InterPro" id="IPR016185">
    <property type="entry name" value="PreATP-grasp_dom_sf"/>
</dbReference>
<dbReference type="NCBIfam" id="TIGR01205">
    <property type="entry name" value="D_ala_D_alaTIGR"/>
    <property type="match status" value="1"/>
</dbReference>
<dbReference type="NCBIfam" id="NF002378">
    <property type="entry name" value="PRK01372.1"/>
    <property type="match status" value="1"/>
</dbReference>
<dbReference type="NCBIfam" id="NF002528">
    <property type="entry name" value="PRK01966.1-4"/>
    <property type="match status" value="1"/>
</dbReference>
<dbReference type="PANTHER" id="PTHR23132">
    <property type="entry name" value="D-ALANINE--D-ALANINE LIGASE"/>
    <property type="match status" value="1"/>
</dbReference>
<dbReference type="PANTHER" id="PTHR23132:SF25">
    <property type="entry name" value="D-ALANINE--D-ALANINE LIGASE A"/>
    <property type="match status" value="1"/>
</dbReference>
<dbReference type="Pfam" id="PF07478">
    <property type="entry name" value="Dala_Dala_lig_C"/>
    <property type="match status" value="1"/>
</dbReference>
<dbReference type="Pfam" id="PF01820">
    <property type="entry name" value="Dala_Dala_lig_N"/>
    <property type="match status" value="1"/>
</dbReference>
<dbReference type="PIRSF" id="PIRSF039102">
    <property type="entry name" value="Ddl/VanB"/>
    <property type="match status" value="1"/>
</dbReference>
<dbReference type="SUPFAM" id="SSF56059">
    <property type="entry name" value="Glutathione synthetase ATP-binding domain-like"/>
    <property type="match status" value="1"/>
</dbReference>
<dbReference type="SUPFAM" id="SSF52440">
    <property type="entry name" value="PreATP-grasp domain"/>
    <property type="match status" value="1"/>
</dbReference>
<dbReference type="PROSITE" id="PS50975">
    <property type="entry name" value="ATP_GRASP"/>
    <property type="match status" value="1"/>
</dbReference>
<dbReference type="PROSITE" id="PS00843">
    <property type="entry name" value="DALA_DALA_LIGASE_1"/>
    <property type="match status" value="1"/>
</dbReference>
<dbReference type="PROSITE" id="PS00844">
    <property type="entry name" value="DALA_DALA_LIGASE_2"/>
    <property type="match status" value="1"/>
</dbReference>